<accession>Q39IR6</accession>
<gene>
    <name evidence="1" type="primary">ubiD</name>
    <name type="ordered locus">Bcep18194_A4053</name>
</gene>
<organism>
    <name type="scientific">Burkholderia lata (strain ATCC 17760 / DSM 23089 / LMG 22485 / NCIMB 9086 / R18194 / 383)</name>
    <dbReference type="NCBI Taxonomy" id="482957"/>
    <lineage>
        <taxon>Bacteria</taxon>
        <taxon>Pseudomonadati</taxon>
        <taxon>Pseudomonadota</taxon>
        <taxon>Betaproteobacteria</taxon>
        <taxon>Burkholderiales</taxon>
        <taxon>Burkholderiaceae</taxon>
        <taxon>Burkholderia</taxon>
        <taxon>Burkholderia cepacia complex</taxon>
    </lineage>
</organism>
<keyword id="KW-1003">Cell membrane</keyword>
<keyword id="KW-0210">Decarboxylase</keyword>
<keyword id="KW-0285">Flavoprotein</keyword>
<keyword id="KW-0288">FMN</keyword>
<keyword id="KW-0456">Lyase</keyword>
<keyword id="KW-0464">Manganese</keyword>
<keyword id="KW-0472">Membrane</keyword>
<keyword id="KW-0479">Metal-binding</keyword>
<keyword id="KW-0831">Ubiquinone biosynthesis</keyword>
<protein>
    <recommendedName>
        <fullName evidence="1">3-octaprenyl-4-hydroxybenzoate carboxy-lyase</fullName>
        <ecNumber evidence="1">4.1.1.98</ecNumber>
    </recommendedName>
    <alternativeName>
        <fullName evidence="1">Polyprenyl p-hydroxybenzoate decarboxylase</fullName>
    </alternativeName>
</protein>
<name>UBID_BURL3</name>
<proteinExistence type="inferred from homology"/>
<reference key="1">
    <citation type="submission" date="2005-10" db="EMBL/GenBank/DDBJ databases">
        <title>Complete sequence of chromosome 1 of Burkholderia sp. 383.</title>
        <authorList>
            <consortium name="US DOE Joint Genome Institute"/>
            <person name="Copeland A."/>
            <person name="Lucas S."/>
            <person name="Lapidus A."/>
            <person name="Barry K."/>
            <person name="Detter J.C."/>
            <person name="Glavina T."/>
            <person name="Hammon N."/>
            <person name="Israni S."/>
            <person name="Pitluck S."/>
            <person name="Chain P."/>
            <person name="Malfatti S."/>
            <person name="Shin M."/>
            <person name="Vergez L."/>
            <person name="Schmutz J."/>
            <person name="Larimer F."/>
            <person name="Land M."/>
            <person name="Kyrpides N."/>
            <person name="Lykidis A."/>
            <person name="Richardson P."/>
        </authorList>
    </citation>
    <scope>NUCLEOTIDE SEQUENCE [LARGE SCALE GENOMIC DNA]</scope>
    <source>
        <strain>ATCC 17760 / DSM 23089 / LMG 22485 / NCIMB 9086 / R18194 / 383</strain>
    </source>
</reference>
<evidence type="ECO:0000255" key="1">
    <source>
        <dbReference type="HAMAP-Rule" id="MF_01636"/>
    </source>
</evidence>
<dbReference type="EC" id="4.1.1.98" evidence="1"/>
<dbReference type="EMBL" id="CP000151">
    <property type="protein sequence ID" value="ABB07650.1"/>
    <property type="molecule type" value="Genomic_DNA"/>
</dbReference>
<dbReference type="RefSeq" id="WP_011351231.1">
    <property type="nucleotide sequence ID" value="NC_007510.1"/>
</dbReference>
<dbReference type="SMR" id="Q39IR6"/>
<dbReference type="GeneID" id="45093952"/>
<dbReference type="KEGG" id="bur:Bcep18194_A4053"/>
<dbReference type="PATRIC" id="fig|482957.22.peg.933"/>
<dbReference type="HOGENOM" id="CLU_023348_4_1_4"/>
<dbReference type="UniPathway" id="UPA00232"/>
<dbReference type="Proteomes" id="UP000002705">
    <property type="component" value="Chromosome 1"/>
</dbReference>
<dbReference type="GO" id="GO:0005829">
    <property type="term" value="C:cytosol"/>
    <property type="evidence" value="ECO:0007669"/>
    <property type="project" value="TreeGrafter"/>
</dbReference>
<dbReference type="GO" id="GO:0005886">
    <property type="term" value="C:plasma membrane"/>
    <property type="evidence" value="ECO:0007669"/>
    <property type="project" value="UniProtKB-SubCell"/>
</dbReference>
<dbReference type="GO" id="GO:0008694">
    <property type="term" value="F:3-octaprenyl-4-hydroxybenzoate carboxy-lyase activity"/>
    <property type="evidence" value="ECO:0007669"/>
    <property type="project" value="UniProtKB-UniRule"/>
</dbReference>
<dbReference type="GO" id="GO:0046872">
    <property type="term" value="F:metal ion binding"/>
    <property type="evidence" value="ECO:0007669"/>
    <property type="project" value="UniProtKB-KW"/>
</dbReference>
<dbReference type="GO" id="GO:0006744">
    <property type="term" value="P:ubiquinone biosynthetic process"/>
    <property type="evidence" value="ECO:0007669"/>
    <property type="project" value="UniProtKB-UniRule"/>
</dbReference>
<dbReference type="FunFam" id="1.20.5.570:FF:000001">
    <property type="entry name" value="3-octaprenyl-4-hydroxybenzoate carboxy-lyase"/>
    <property type="match status" value="1"/>
</dbReference>
<dbReference type="FunFam" id="3.40.1670.10:FF:000001">
    <property type="entry name" value="3-octaprenyl-4-hydroxybenzoate carboxy-lyase"/>
    <property type="match status" value="1"/>
</dbReference>
<dbReference type="Gene3D" id="1.20.5.570">
    <property type="entry name" value="Single helix bin"/>
    <property type="match status" value="1"/>
</dbReference>
<dbReference type="Gene3D" id="3.40.1670.10">
    <property type="entry name" value="UbiD C-terminal domain-like"/>
    <property type="match status" value="1"/>
</dbReference>
<dbReference type="HAMAP" id="MF_01636">
    <property type="entry name" value="UbiD"/>
    <property type="match status" value="1"/>
</dbReference>
<dbReference type="InterPro" id="IPR002830">
    <property type="entry name" value="UbiD"/>
</dbReference>
<dbReference type="InterPro" id="IPR049381">
    <property type="entry name" value="UbiD-like_C"/>
</dbReference>
<dbReference type="InterPro" id="IPR049383">
    <property type="entry name" value="UbiD-like_N"/>
</dbReference>
<dbReference type="InterPro" id="IPR023677">
    <property type="entry name" value="UbiD_bacteria"/>
</dbReference>
<dbReference type="InterPro" id="IPR048304">
    <property type="entry name" value="UbiD_Rift_dom"/>
</dbReference>
<dbReference type="NCBIfam" id="TIGR00148">
    <property type="entry name" value="UbiD family decarboxylase"/>
    <property type="match status" value="2"/>
</dbReference>
<dbReference type="PANTHER" id="PTHR30108">
    <property type="entry name" value="3-OCTAPRENYL-4-HYDROXYBENZOATE CARBOXY-LYASE-RELATED"/>
    <property type="match status" value="1"/>
</dbReference>
<dbReference type="PANTHER" id="PTHR30108:SF17">
    <property type="entry name" value="FERULIC ACID DECARBOXYLASE 1"/>
    <property type="match status" value="1"/>
</dbReference>
<dbReference type="Pfam" id="PF01977">
    <property type="entry name" value="UbiD"/>
    <property type="match status" value="1"/>
</dbReference>
<dbReference type="Pfam" id="PF20696">
    <property type="entry name" value="UbiD_C"/>
    <property type="match status" value="1"/>
</dbReference>
<dbReference type="Pfam" id="PF20695">
    <property type="entry name" value="UbiD_N"/>
    <property type="match status" value="1"/>
</dbReference>
<dbReference type="SUPFAM" id="SSF50475">
    <property type="entry name" value="FMN-binding split barrel"/>
    <property type="match status" value="1"/>
</dbReference>
<dbReference type="SUPFAM" id="SSF143968">
    <property type="entry name" value="UbiD C-terminal domain-like"/>
    <property type="match status" value="1"/>
</dbReference>
<sequence length="518" mass="57266">MKYKDLRDFIQRLEALGELRRVTQPVSPVLEMTELCDRVLRAGGPALLFNAPTGYDFPVLGNLFGTPRRVALGMGVDAGDDAALDSLRDLGRLLSALKEPDPPKSLKDAGKLLSLAKAVWDMAPKSVSSPPCQEIVWEGADVDLNRLPIQTCWPGDAGPLVTWGLTVTRGPNKSRQNLGIYRQQLIGRNKLIMRWLAHRGGALDFREFALQNPGKPYPVAVVLGADPATTLGAVTPVPDSLSEYQFAGLLRGSRTELAKCLTPGVDTLQVPARAEIVLEGFIYPQEGAPAPAPAGAPPRPAGNASAKYEHALEGPYGDHTGYYNEQEWFPVFTVERITMRRDAIYHSTYTGKPPDEPAVLGVALNEVFVPLLQKQFTEITDFYLPPEGCSYRMAIVQMKKSYAGHAKRVMFGVWSFLRQFMYTKFIVVVDEDVNIRDWKEVIWAITTRVDPVRDTVMVDSTPIDYLDFASPVAGLGSKMGLDATNKWPGETNREWGRPIEMDAAVKARVDRLWQEIGL</sequence>
<feature type="chain" id="PRO_0000267656" description="3-octaprenyl-4-hydroxybenzoate carboxy-lyase">
    <location>
        <begin position="1"/>
        <end position="518"/>
    </location>
</feature>
<feature type="active site" description="Proton donor" evidence="1">
    <location>
        <position position="318"/>
    </location>
</feature>
<feature type="binding site" evidence="1">
    <location>
        <position position="177"/>
    </location>
    <ligand>
        <name>Mn(2+)</name>
        <dbReference type="ChEBI" id="CHEBI:29035"/>
    </ligand>
</feature>
<feature type="binding site" evidence="1">
    <location>
        <begin position="180"/>
        <end position="182"/>
    </location>
    <ligand>
        <name>prenylated FMN</name>
        <dbReference type="ChEBI" id="CHEBI:87746"/>
    </ligand>
</feature>
<feature type="binding site" evidence="1">
    <location>
        <begin position="194"/>
        <end position="196"/>
    </location>
    <ligand>
        <name>prenylated FMN</name>
        <dbReference type="ChEBI" id="CHEBI:87746"/>
    </ligand>
</feature>
<feature type="binding site" evidence="1">
    <location>
        <begin position="199"/>
        <end position="200"/>
    </location>
    <ligand>
        <name>prenylated FMN</name>
        <dbReference type="ChEBI" id="CHEBI:87746"/>
    </ligand>
</feature>
<feature type="binding site" evidence="1">
    <location>
        <position position="243"/>
    </location>
    <ligand>
        <name>Mn(2+)</name>
        <dbReference type="ChEBI" id="CHEBI:29035"/>
    </ligand>
</feature>
<comment type="function">
    <text evidence="1">Catalyzes the decarboxylation of 3-octaprenyl-4-hydroxy benzoate to 2-octaprenylphenol, an intermediate step in ubiquinone biosynthesis.</text>
</comment>
<comment type="catalytic activity">
    <reaction evidence="1">
        <text>a 4-hydroxy-3-(all-trans-polyprenyl)benzoate + H(+) = a 2-(all-trans-polyprenyl)phenol + CO2</text>
        <dbReference type="Rhea" id="RHEA:41680"/>
        <dbReference type="Rhea" id="RHEA-COMP:9514"/>
        <dbReference type="Rhea" id="RHEA-COMP:9516"/>
        <dbReference type="ChEBI" id="CHEBI:1269"/>
        <dbReference type="ChEBI" id="CHEBI:15378"/>
        <dbReference type="ChEBI" id="CHEBI:16526"/>
        <dbReference type="ChEBI" id="CHEBI:78396"/>
        <dbReference type="EC" id="4.1.1.98"/>
    </reaction>
</comment>
<comment type="cofactor">
    <cofactor evidence="1">
        <name>prenylated FMN</name>
        <dbReference type="ChEBI" id="CHEBI:87746"/>
    </cofactor>
    <text evidence="1">Binds 1 prenylated FMN per subunit.</text>
</comment>
<comment type="cofactor">
    <cofactor evidence="1">
        <name>Mn(2+)</name>
        <dbReference type="ChEBI" id="CHEBI:29035"/>
    </cofactor>
</comment>
<comment type="pathway">
    <text evidence="1">Cofactor biosynthesis; ubiquinone biosynthesis.</text>
</comment>
<comment type="subunit">
    <text evidence="1">Homohexamer.</text>
</comment>
<comment type="subcellular location">
    <subcellularLocation>
        <location evidence="1">Cell membrane</location>
        <topology evidence="1">Peripheral membrane protein</topology>
    </subcellularLocation>
</comment>
<comment type="similarity">
    <text evidence="1">Belongs to the UbiD family.</text>
</comment>